<protein>
    <recommendedName>
        <fullName evidence="1">Phospho-N-acetylmuramoyl-pentapeptide-transferase</fullName>
        <ecNumber evidence="1">2.7.8.13</ecNumber>
    </recommendedName>
    <alternativeName>
        <fullName evidence="1">UDP-MurNAc-pentapeptide phosphotransferase</fullName>
    </alternativeName>
</protein>
<sequence>MRGVLIAAMVALVVSLLGTPWVIRFFRRQGYGQEIREDGPSSHLTKRGTPTMGGTVIIVATLVGYFLAHLVTGIGFTASGLLVLLVMTGLGIVGFLDDYIKIRKQRSLGLTARMKFTGQAAVALAFGLLAVRFKNHAGLLPGSTYISIVRDTSLTVGIIGFPLLAWIIIAATSNAVNLTDGLDGLAAGTSAMVFGAYVVISFWQFGNLCEPGDSPAGCYAVRDPLDVALVAAAAMGACFGFLWWNASPAKIFMGDTGSLALGGAFASIAIVSRTELLLVVLGGLFVIETLSVMIQVAFFKATKKRVFNMAPIHHHFELAEWPETTVIIRFWIVSGLAVAFGLGLFYAEFLSHGNG</sequence>
<gene>
    <name evidence="1" type="primary">mraY</name>
    <name type="ordered locus">FRAAL2193</name>
</gene>
<comment type="function">
    <text evidence="1">Catalyzes the initial step of the lipid cycle reactions in the biosynthesis of the cell wall peptidoglycan: transfers peptidoglycan precursor phospho-MurNAc-pentapeptide from UDP-MurNAc-pentapeptide onto the lipid carrier undecaprenyl phosphate, yielding undecaprenyl-pyrophosphoryl-MurNAc-pentapeptide, known as lipid I.</text>
</comment>
<comment type="catalytic activity">
    <reaction evidence="1">
        <text>UDP-N-acetyl-alpha-D-muramoyl-L-alanyl-gamma-D-glutamyl-meso-2,6-diaminopimeloyl-D-alanyl-D-alanine + di-trans,octa-cis-undecaprenyl phosphate = di-trans,octa-cis-undecaprenyl diphospho-N-acetyl-alpha-D-muramoyl-L-alanyl-D-glutamyl-meso-2,6-diaminopimeloyl-D-alanyl-D-alanine + UMP</text>
        <dbReference type="Rhea" id="RHEA:28386"/>
        <dbReference type="ChEBI" id="CHEBI:57865"/>
        <dbReference type="ChEBI" id="CHEBI:60392"/>
        <dbReference type="ChEBI" id="CHEBI:61386"/>
        <dbReference type="ChEBI" id="CHEBI:61387"/>
        <dbReference type="EC" id="2.7.8.13"/>
    </reaction>
</comment>
<comment type="cofactor">
    <cofactor evidence="1">
        <name>Mg(2+)</name>
        <dbReference type="ChEBI" id="CHEBI:18420"/>
    </cofactor>
</comment>
<comment type="pathway">
    <text evidence="1">Cell wall biogenesis; peptidoglycan biosynthesis.</text>
</comment>
<comment type="subcellular location">
    <subcellularLocation>
        <location evidence="1">Cell membrane</location>
        <topology evidence="1">Multi-pass membrane protein</topology>
    </subcellularLocation>
</comment>
<comment type="similarity">
    <text evidence="1">Belongs to the glycosyltransferase 4 family. MraY subfamily.</text>
</comment>
<name>MRAY_FRAAA</name>
<feature type="chain" id="PRO_1000002974" description="Phospho-N-acetylmuramoyl-pentapeptide-transferase">
    <location>
        <begin position="1"/>
        <end position="355"/>
    </location>
</feature>
<feature type="transmembrane region" description="Helical" evidence="1">
    <location>
        <begin position="3"/>
        <end position="23"/>
    </location>
</feature>
<feature type="transmembrane region" description="Helical" evidence="1">
    <location>
        <begin position="56"/>
        <end position="76"/>
    </location>
</feature>
<feature type="transmembrane region" description="Helical" evidence="1">
    <location>
        <begin position="80"/>
        <end position="100"/>
    </location>
</feature>
<feature type="transmembrane region" description="Helical" evidence="1">
    <location>
        <begin position="120"/>
        <end position="140"/>
    </location>
</feature>
<feature type="transmembrane region" description="Helical" evidence="1">
    <location>
        <begin position="152"/>
        <end position="172"/>
    </location>
</feature>
<feature type="transmembrane region" description="Helical" evidence="1">
    <location>
        <begin position="185"/>
        <end position="205"/>
    </location>
</feature>
<feature type="transmembrane region" description="Helical" evidence="1">
    <location>
        <begin position="224"/>
        <end position="244"/>
    </location>
</feature>
<feature type="transmembrane region" description="Helical" evidence="1">
    <location>
        <begin position="251"/>
        <end position="271"/>
    </location>
</feature>
<feature type="transmembrane region" description="Helical" evidence="1">
    <location>
        <begin position="276"/>
        <end position="296"/>
    </location>
</feature>
<feature type="transmembrane region" description="Helical" evidence="1">
    <location>
        <begin position="330"/>
        <end position="350"/>
    </location>
</feature>
<reference key="1">
    <citation type="journal article" date="2007" name="Genome Res.">
        <title>Genome characteristics of facultatively symbiotic Frankia sp. strains reflect host range and host plant biogeography.</title>
        <authorList>
            <person name="Normand P."/>
            <person name="Lapierre P."/>
            <person name="Tisa L.S."/>
            <person name="Gogarten J.P."/>
            <person name="Alloisio N."/>
            <person name="Bagnarol E."/>
            <person name="Bassi C.A."/>
            <person name="Berry A.M."/>
            <person name="Bickhart D.M."/>
            <person name="Choisne N."/>
            <person name="Couloux A."/>
            <person name="Cournoyer B."/>
            <person name="Cruveiller S."/>
            <person name="Daubin V."/>
            <person name="Demange N."/>
            <person name="Francino M.P."/>
            <person name="Goltsman E."/>
            <person name="Huang Y."/>
            <person name="Kopp O.R."/>
            <person name="Labarre L."/>
            <person name="Lapidus A."/>
            <person name="Lavire C."/>
            <person name="Marechal J."/>
            <person name="Martinez M."/>
            <person name="Mastronunzio J.E."/>
            <person name="Mullin B.C."/>
            <person name="Niemann J."/>
            <person name="Pujic P."/>
            <person name="Rawnsley T."/>
            <person name="Rouy Z."/>
            <person name="Schenowitz C."/>
            <person name="Sellstedt A."/>
            <person name="Tavares F."/>
            <person name="Tomkins J.P."/>
            <person name="Vallenet D."/>
            <person name="Valverde C."/>
            <person name="Wall L.G."/>
            <person name="Wang Y."/>
            <person name="Medigue C."/>
            <person name="Benson D.R."/>
        </authorList>
    </citation>
    <scope>NUCLEOTIDE SEQUENCE [LARGE SCALE GENOMIC DNA]</scope>
    <source>
        <strain>DSM 45986 / CECT 9034 / ACN14a</strain>
    </source>
</reference>
<proteinExistence type="inferred from homology"/>
<accession>Q0RNP4</accession>
<evidence type="ECO:0000255" key="1">
    <source>
        <dbReference type="HAMAP-Rule" id="MF_00038"/>
    </source>
</evidence>
<keyword id="KW-0131">Cell cycle</keyword>
<keyword id="KW-0132">Cell division</keyword>
<keyword id="KW-1003">Cell membrane</keyword>
<keyword id="KW-0133">Cell shape</keyword>
<keyword id="KW-0961">Cell wall biogenesis/degradation</keyword>
<keyword id="KW-0460">Magnesium</keyword>
<keyword id="KW-0472">Membrane</keyword>
<keyword id="KW-0479">Metal-binding</keyword>
<keyword id="KW-0573">Peptidoglycan synthesis</keyword>
<keyword id="KW-1185">Reference proteome</keyword>
<keyword id="KW-0808">Transferase</keyword>
<keyword id="KW-0812">Transmembrane</keyword>
<keyword id="KW-1133">Transmembrane helix</keyword>
<dbReference type="EC" id="2.7.8.13" evidence="1"/>
<dbReference type="EMBL" id="CT573213">
    <property type="protein sequence ID" value="CAJ60842.1"/>
    <property type="molecule type" value="Genomic_DNA"/>
</dbReference>
<dbReference type="RefSeq" id="WP_011603358.1">
    <property type="nucleotide sequence ID" value="NC_008278.1"/>
</dbReference>
<dbReference type="SMR" id="Q0RNP4"/>
<dbReference type="STRING" id="326424.FRAAL2193"/>
<dbReference type="KEGG" id="fal:FRAAL2193"/>
<dbReference type="eggNOG" id="COG0472">
    <property type="taxonomic scope" value="Bacteria"/>
</dbReference>
<dbReference type="HOGENOM" id="CLU_023982_0_1_11"/>
<dbReference type="OrthoDB" id="9805475at2"/>
<dbReference type="UniPathway" id="UPA00219"/>
<dbReference type="Proteomes" id="UP000000657">
    <property type="component" value="Chromosome"/>
</dbReference>
<dbReference type="GO" id="GO:0005886">
    <property type="term" value="C:plasma membrane"/>
    <property type="evidence" value="ECO:0007669"/>
    <property type="project" value="UniProtKB-SubCell"/>
</dbReference>
<dbReference type="GO" id="GO:0046872">
    <property type="term" value="F:metal ion binding"/>
    <property type="evidence" value="ECO:0007669"/>
    <property type="project" value="UniProtKB-KW"/>
</dbReference>
<dbReference type="GO" id="GO:0008963">
    <property type="term" value="F:phospho-N-acetylmuramoyl-pentapeptide-transferase activity"/>
    <property type="evidence" value="ECO:0007669"/>
    <property type="project" value="UniProtKB-UniRule"/>
</dbReference>
<dbReference type="GO" id="GO:0051992">
    <property type="term" value="F:UDP-N-acetylmuramoyl-L-alanyl-D-glutamyl-meso-2,6-diaminopimelyl-D-alanyl-D-alanine:undecaprenyl-phosphate transferase activity"/>
    <property type="evidence" value="ECO:0007669"/>
    <property type="project" value="RHEA"/>
</dbReference>
<dbReference type="GO" id="GO:0051301">
    <property type="term" value="P:cell division"/>
    <property type="evidence" value="ECO:0007669"/>
    <property type="project" value="UniProtKB-KW"/>
</dbReference>
<dbReference type="GO" id="GO:0071555">
    <property type="term" value="P:cell wall organization"/>
    <property type="evidence" value="ECO:0007669"/>
    <property type="project" value="UniProtKB-KW"/>
</dbReference>
<dbReference type="GO" id="GO:0009252">
    <property type="term" value="P:peptidoglycan biosynthetic process"/>
    <property type="evidence" value="ECO:0007669"/>
    <property type="project" value="UniProtKB-UniRule"/>
</dbReference>
<dbReference type="GO" id="GO:0008360">
    <property type="term" value="P:regulation of cell shape"/>
    <property type="evidence" value="ECO:0007669"/>
    <property type="project" value="UniProtKB-KW"/>
</dbReference>
<dbReference type="CDD" id="cd06852">
    <property type="entry name" value="GT_MraY"/>
    <property type="match status" value="1"/>
</dbReference>
<dbReference type="HAMAP" id="MF_00038">
    <property type="entry name" value="MraY"/>
    <property type="match status" value="1"/>
</dbReference>
<dbReference type="InterPro" id="IPR000715">
    <property type="entry name" value="Glycosyl_transferase_4"/>
</dbReference>
<dbReference type="InterPro" id="IPR003524">
    <property type="entry name" value="PNAcMuramoyl-5peptid_Trfase"/>
</dbReference>
<dbReference type="InterPro" id="IPR018480">
    <property type="entry name" value="PNAcMuramoyl-5peptid_Trfase_CS"/>
</dbReference>
<dbReference type="NCBIfam" id="TIGR00445">
    <property type="entry name" value="mraY"/>
    <property type="match status" value="1"/>
</dbReference>
<dbReference type="PANTHER" id="PTHR22926">
    <property type="entry name" value="PHOSPHO-N-ACETYLMURAMOYL-PENTAPEPTIDE-TRANSFERASE"/>
    <property type="match status" value="1"/>
</dbReference>
<dbReference type="PANTHER" id="PTHR22926:SF5">
    <property type="entry name" value="PHOSPHO-N-ACETYLMURAMOYL-PENTAPEPTIDE-TRANSFERASE HOMOLOG"/>
    <property type="match status" value="1"/>
</dbReference>
<dbReference type="Pfam" id="PF00953">
    <property type="entry name" value="Glycos_transf_4"/>
    <property type="match status" value="1"/>
</dbReference>
<dbReference type="Pfam" id="PF10555">
    <property type="entry name" value="MraY_sig1"/>
    <property type="match status" value="1"/>
</dbReference>
<dbReference type="PROSITE" id="PS01348">
    <property type="entry name" value="MRAY_2"/>
    <property type="match status" value="1"/>
</dbReference>
<organism>
    <name type="scientific">Frankia alni (strain DSM 45986 / CECT 9034 / ACN14a)</name>
    <dbReference type="NCBI Taxonomy" id="326424"/>
    <lineage>
        <taxon>Bacteria</taxon>
        <taxon>Bacillati</taxon>
        <taxon>Actinomycetota</taxon>
        <taxon>Actinomycetes</taxon>
        <taxon>Frankiales</taxon>
        <taxon>Frankiaceae</taxon>
        <taxon>Frankia</taxon>
    </lineage>
</organism>